<accession>Q8EVL6</accession>
<evidence type="ECO:0000255" key="1">
    <source>
        <dbReference type="HAMAP-Rule" id="MF_01382"/>
    </source>
</evidence>
<evidence type="ECO:0000305" key="2"/>
<keyword id="KW-0067">ATP-binding</keyword>
<keyword id="KW-1003">Cell membrane</keyword>
<keyword id="KW-0963">Cytoplasm</keyword>
<keyword id="KW-0472">Membrane</keyword>
<keyword id="KW-0547">Nucleotide-binding</keyword>
<keyword id="KW-0653">Protein transport</keyword>
<keyword id="KW-1185">Reference proteome</keyword>
<keyword id="KW-1278">Translocase</keyword>
<keyword id="KW-0811">Translocation</keyword>
<keyword id="KW-0813">Transport</keyword>
<reference key="1">
    <citation type="journal article" date="2002" name="Nucleic Acids Res.">
        <title>The complete genomic sequence of Mycoplasma penetrans, an intracellular bacterial pathogen in humans.</title>
        <authorList>
            <person name="Sasaki Y."/>
            <person name="Ishikawa J."/>
            <person name="Yamashita A."/>
            <person name="Oshima K."/>
            <person name="Kenri T."/>
            <person name="Furuya K."/>
            <person name="Yoshino C."/>
            <person name="Horino A."/>
            <person name="Shiba T."/>
            <person name="Sasaki T."/>
            <person name="Hattori M."/>
        </authorList>
    </citation>
    <scope>NUCLEOTIDE SEQUENCE [LARGE SCALE GENOMIC DNA]</scope>
    <source>
        <strain>HF-2</strain>
    </source>
</reference>
<feature type="chain" id="PRO_0000321058" description="Protein translocase subunit SecA">
    <location>
        <begin position="1"/>
        <end position="1405"/>
    </location>
</feature>
<feature type="region of interest" description="Protein translocase subunit SecA">
    <location>
        <begin position="1"/>
        <end position="1099"/>
    </location>
</feature>
<feature type="region of interest" description="Unknown">
    <location>
        <begin position="1100"/>
        <end position="1405"/>
    </location>
</feature>
<feature type="binding site" evidence="1">
    <location>
        <position position="88"/>
    </location>
    <ligand>
        <name>ATP</name>
        <dbReference type="ChEBI" id="CHEBI:30616"/>
    </ligand>
</feature>
<feature type="binding site" evidence="1">
    <location>
        <begin position="106"/>
        <end position="110"/>
    </location>
    <ligand>
        <name>ATP</name>
        <dbReference type="ChEBI" id="CHEBI:30616"/>
    </ligand>
</feature>
<feature type="binding site" evidence="1">
    <location>
        <position position="494"/>
    </location>
    <ligand>
        <name>ATP</name>
        <dbReference type="ChEBI" id="CHEBI:30616"/>
    </ligand>
</feature>
<dbReference type="EC" id="7.4.2.8" evidence="1"/>
<dbReference type="EMBL" id="BA000026">
    <property type="protein sequence ID" value="BAC44337.1"/>
    <property type="molecule type" value="Genomic_DNA"/>
</dbReference>
<dbReference type="SMR" id="Q8EVL6"/>
<dbReference type="FunCoup" id="Q8EVL6">
    <property type="interactions" value="241"/>
</dbReference>
<dbReference type="STRING" id="272633.gene:10731664"/>
<dbReference type="KEGG" id="mpe:MYPE5470"/>
<dbReference type="eggNOG" id="COG0653">
    <property type="taxonomic scope" value="Bacteria"/>
</dbReference>
<dbReference type="HOGENOM" id="CLU_254030_0_0_14"/>
<dbReference type="InParanoid" id="Q8EVL6"/>
<dbReference type="Proteomes" id="UP000002522">
    <property type="component" value="Chromosome"/>
</dbReference>
<dbReference type="GO" id="GO:0031522">
    <property type="term" value="C:cell envelope Sec protein transport complex"/>
    <property type="evidence" value="ECO:0007669"/>
    <property type="project" value="TreeGrafter"/>
</dbReference>
<dbReference type="GO" id="GO:0005829">
    <property type="term" value="C:cytosol"/>
    <property type="evidence" value="ECO:0007669"/>
    <property type="project" value="TreeGrafter"/>
</dbReference>
<dbReference type="GO" id="GO:0005886">
    <property type="term" value="C:plasma membrane"/>
    <property type="evidence" value="ECO:0007669"/>
    <property type="project" value="UniProtKB-SubCell"/>
</dbReference>
<dbReference type="GO" id="GO:0005524">
    <property type="term" value="F:ATP binding"/>
    <property type="evidence" value="ECO:0007669"/>
    <property type="project" value="UniProtKB-UniRule"/>
</dbReference>
<dbReference type="GO" id="GO:0008564">
    <property type="term" value="F:protein-exporting ATPase activity"/>
    <property type="evidence" value="ECO:0007669"/>
    <property type="project" value="UniProtKB-EC"/>
</dbReference>
<dbReference type="GO" id="GO:0065002">
    <property type="term" value="P:intracellular protein transmembrane transport"/>
    <property type="evidence" value="ECO:0007669"/>
    <property type="project" value="UniProtKB-UniRule"/>
</dbReference>
<dbReference type="GO" id="GO:0017038">
    <property type="term" value="P:protein import"/>
    <property type="evidence" value="ECO:0007669"/>
    <property type="project" value="InterPro"/>
</dbReference>
<dbReference type="GO" id="GO:0006605">
    <property type="term" value="P:protein targeting"/>
    <property type="evidence" value="ECO:0007669"/>
    <property type="project" value="UniProtKB-UniRule"/>
</dbReference>
<dbReference type="GO" id="GO:0043952">
    <property type="term" value="P:protein transport by the Sec complex"/>
    <property type="evidence" value="ECO:0007669"/>
    <property type="project" value="TreeGrafter"/>
</dbReference>
<dbReference type="CDD" id="cd17928">
    <property type="entry name" value="DEXDc_SecA"/>
    <property type="match status" value="1"/>
</dbReference>
<dbReference type="CDD" id="cd18803">
    <property type="entry name" value="SF2_C_secA"/>
    <property type="match status" value="1"/>
</dbReference>
<dbReference type="FunFam" id="3.40.50.300:FF:000429">
    <property type="entry name" value="Preprotein translocase subunit SecA"/>
    <property type="match status" value="1"/>
</dbReference>
<dbReference type="Gene3D" id="1.10.3060.10">
    <property type="entry name" value="Helical scaffold and wing domains of SecA"/>
    <property type="match status" value="1"/>
</dbReference>
<dbReference type="Gene3D" id="3.40.50.300">
    <property type="entry name" value="P-loop containing nucleotide triphosphate hydrolases"/>
    <property type="match status" value="3"/>
</dbReference>
<dbReference type="Gene3D" id="3.90.1440.10">
    <property type="entry name" value="SecA, preprotein cross-linking domain"/>
    <property type="match status" value="1"/>
</dbReference>
<dbReference type="HAMAP" id="MF_01382">
    <property type="entry name" value="SecA"/>
    <property type="match status" value="1"/>
</dbReference>
<dbReference type="InterPro" id="IPR014001">
    <property type="entry name" value="Helicase_ATP-bd"/>
</dbReference>
<dbReference type="InterPro" id="IPR001650">
    <property type="entry name" value="Helicase_C-like"/>
</dbReference>
<dbReference type="InterPro" id="IPR027417">
    <property type="entry name" value="P-loop_NTPase"/>
</dbReference>
<dbReference type="InterPro" id="IPR000185">
    <property type="entry name" value="SecA"/>
</dbReference>
<dbReference type="InterPro" id="IPR011115">
    <property type="entry name" value="SecA_DEAD"/>
</dbReference>
<dbReference type="InterPro" id="IPR014018">
    <property type="entry name" value="SecA_motor_DEAD"/>
</dbReference>
<dbReference type="InterPro" id="IPR011130">
    <property type="entry name" value="SecA_preprotein_X-link_dom"/>
</dbReference>
<dbReference type="InterPro" id="IPR044722">
    <property type="entry name" value="SecA_SF2_C"/>
</dbReference>
<dbReference type="InterPro" id="IPR011116">
    <property type="entry name" value="SecA_Wing/Scaffold"/>
</dbReference>
<dbReference type="InterPro" id="IPR036266">
    <property type="entry name" value="SecA_Wing/Scaffold_sf"/>
</dbReference>
<dbReference type="InterPro" id="IPR036670">
    <property type="entry name" value="SecA_X-link_sf"/>
</dbReference>
<dbReference type="NCBIfam" id="TIGR00963">
    <property type="entry name" value="secA"/>
    <property type="match status" value="1"/>
</dbReference>
<dbReference type="PANTHER" id="PTHR30612:SF0">
    <property type="entry name" value="CHLOROPLAST PROTEIN-TRANSPORTING ATPASE"/>
    <property type="match status" value="1"/>
</dbReference>
<dbReference type="PANTHER" id="PTHR30612">
    <property type="entry name" value="SECA INNER MEMBRANE COMPONENT OF SEC PROTEIN SECRETION SYSTEM"/>
    <property type="match status" value="1"/>
</dbReference>
<dbReference type="Pfam" id="PF21090">
    <property type="entry name" value="P-loop_SecA"/>
    <property type="match status" value="1"/>
</dbReference>
<dbReference type="Pfam" id="PF07517">
    <property type="entry name" value="SecA_DEAD"/>
    <property type="match status" value="1"/>
</dbReference>
<dbReference type="Pfam" id="PF01043">
    <property type="entry name" value="SecA_PP_bind"/>
    <property type="match status" value="1"/>
</dbReference>
<dbReference type="Pfam" id="PF07516">
    <property type="entry name" value="SecA_SW"/>
    <property type="match status" value="1"/>
</dbReference>
<dbReference type="PRINTS" id="PR00906">
    <property type="entry name" value="SECA"/>
</dbReference>
<dbReference type="SMART" id="SM00957">
    <property type="entry name" value="SecA_DEAD"/>
    <property type="match status" value="1"/>
</dbReference>
<dbReference type="SMART" id="SM00958">
    <property type="entry name" value="SecA_PP_bind"/>
    <property type="match status" value="1"/>
</dbReference>
<dbReference type="SUPFAM" id="SSF81886">
    <property type="entry name" value="Helical scaffold and wing domains of SecA"/>
    <property type="match status" value="1"/>
</dbReference>
<dbReference type="SUPFAM" id="SSF52540">
    <property type="entry name" value="P-loop containing nucleoside triphosphate hydrolases"/>
    <property type="match status" value="2"/>
</dbReference>
<dbReference type="SUPFAM" id="SSF81767">
    <property type="entry name" value="Pre-protein crosslinking domain of SecA"/>
    <property type="match status" value="1"/>
</dbReference>
<dbReference type="PROSITE" id="PS51196">
    <property type="entry name" value="SECA_MOTOR_DEAD"/>
    <property type="match status" value="1"/>
</dbReference>
<organism>
    <name type="scientific">Malacoplasma penetrans (strain HF-2)</name>
    <name type="common">Mycoplasma penetrans</name>
    <dbReference type="NCBI Taxonomy" id="272633"/>
    <lineage>
        <taxon>Bacteria</taxon>
        <taxon>Bacillati</taxon>
        <taxon>Mycoplasmatota</taxon>
        <taxon>Mycoplasmoidales</taxon>
        <taxon>Mycoplasmoidaceae</taxon>
        <taxon>Malacoplasma</taxon>
    </lineage>
</organism>
<comment type="function">
    <text evidence="1">Part of the Sec protein translocase complex. Interacts with the SecYEG preprotein conducting channel. Has a central role in coupling the hydrolysis of ATP to the transfer of proteins into and across the cell membrane, serving as an ATP-driven molecular motor driving the stepwise translocation of polypeptide chains across the membrane.</text>
</comment>
<comment type="catalytic activity">
    <reaction evidence="1">
        <text>ATP + H2O + cellular proteinSide 1 = ADP + phosphate + cellular proteinSide 2.</text>
        <dbReference type="EC" id="7.4.2.8"/>
    </reaction>
</comment>
<comment type="subunit">
    <text evidence="1">Monomer and homodimer. Part of the essential Sec protein translocation apparatus which comprises SecA, SecYEG and auxiliary proteins SecDF. Other proteins may also be involved.</text>
</comment>
<comment type="subcellular location">
    <subcellularLocation>
        <location evidence="1">Cell membrane</location>
        <topology evidence="1">Peripheral membrane protein</topology>
        <orientation evidence="1">Cytoplasmic side</orientation>
    </subcellularLocation>
    <subcellularLocation>
        <location evidence="1">Cytoplasm</location>
    </subcellularLocation>
    <text evidence="1">Distribution is 50-50.</text>
</comment>
<comment type="similarity">
    <text evidence="1 2">Belongs to the SecA family.</text>
</comment>
<protein>
    <recommendedName>
        <fullName evidence="1">Protein translocase subunit SecA</fullName>
        <ecNumber evidence="1">7.4.2.8</ecNumber>
    </recommendedName>
</protein>
<name>SECA_MALP2</name>
<sequence>MHMKIKKFKKIKKKSKILVKAKLIAQQVENNREEYSALSIEDLRIRTDYLVDGLAKDKFTLEDIIVDALSIAREIIYREHGMLAYEVQMMGAYVVHTGDFAEMYTGEGKSLTLLLVSFVNALTKRGVHIVTVNEYLVERDALFAQKAFEKLGITVGYNTSKLSKATKKEMFARDITYTTNSELGFDYLKDNMVRDINEKVIRELFFVIVDEADSVLIDEARTPLIISGQPKEDFSLYLDIDKFVGSLAEDDYKIDNESNTIALTDQGVSKAEKFFNLTNLYSVESAEIVHKITNSLVAHYIFANGKEYLVKDDKIYLVDQFTGRVLEGRSYNAGLQQAIQAKERVTIEPENVVMATITYQSFFRLYEKLSGVSGTAMTEAEEFLKIYNMVVVRIPTNKPVARIDKQDYIFGTKRVKWNHVIQEIVNRHETGQPILVGTASVTDSEIIHERLTELKIPHEVLNARDNTKEAEIVKHAGEKGAITISTNMAGRGTDIKVSDEIRELGGLYVIGTERHESRRIDNQLRGRTGRQGDPGESRFFTSLEDALFKRFATDRFEKASQKLEEEFYDSRFFSKMLDRTQKKVEGLNFDIRKNLMDYDHVLSLQRELIYKQRDQILLKTNNLNIINNMIDDYVETEILNFKNNDNTSLVDANKIVAFLNEKILKFSYFTPATFANMPILLAIDKAISIIKKVVDVKCKILEKINGLNVIDEILLVNLDQKWTTHIDKMTKLREGVNLRSLEQRSPLNIYIEDGNNLFERMKINVVTDTITSICNLSLPNEMIEITNALDEFVNSEEFKKKNYGNQREIEQNFNSALSFSGSATSEFDNFIESELENTLIEETPEEYVEVEEYIPQQTEPEVVETETTPYGFEIPKYDTSGTDKYELNNGSSEVNILENESDIFENSFSQIQNTFNTEELDPQETPHTAKADDQFVFESANLEDDIEEIENVSNIDKAPEIQQPLSEEEIQKILDMPAFKDDEKPLTIGNYLDNILDSMDIDYDQDKEITQQLEPSSNEQEVTANIPEQNQLDITTSDIDNEIELLDESERESIKEEIQKSISFDLSNDPDFIEYRNSVFVNKNNGIDYSDYKKLNEDESDDDIKAFYKLPKVDKKEPGTLFGGNLLKKTPFNFKNKNELDNEKIKSTNLFREENQASEQELNTLLQLDDEKDRLEKINQLLNKEDPEVLERKELERQVEFETPVYYLEDIPEGESLDNFKAMDNPHEEQSFEDNLVDEENQQLEFEEALDEVIDDGQFNDEVEAAELSEEVLEEVINPNPEELSEEDKWLITKKEHEKFMEKYLGDVKELTSENPEVVTALLQEKNKNLKDVEIIENNEELENTNEEEPNINSQDSFLNNIKIIKTVDKESEDETEIIQEINQPAEIHNLQKDILDYLKENNKK</sequence>
<gene>
    <name evidence="1" type="primary">secA</name>
    <name type="ordered locus">MYPE5470</name>
</gene>
<proteinExistence type="inferred from homology"/>